<reference key="1">
    <citation type="submission" date="2000-10" db="EMBL/GenBank/DDBJ databases">
        <authorList>
            <person name="Schluter O.M."/>
            <person name="Benseler F."/>
            <person name="Suedhof T.C."/>
        </authorList>
    </citation>
    <scope>NUCLEOTIDE SEQUENCE</scope>
    <source>
        <strain>129/SvOla</strain>
        <tissue>Brain</tissue>
    </source>
</reference>
<reference key="2">
    <citation type="journal article" date="2005" name="Science">
        <title>The transcriptional landscape of the mammalian genome.</title>
        <authorList>
            <person name="Carninci P."/>
            <person name="Kasukawa T."/>
            <person name="Katayama S."/>
            <person name="Gough J."/>
            <person name="Frith M.C."/>
            <person name="Maeda N."/>
            <person name="Oyama R."/>
            <person name="Ravasi T."/>
            <person name="Lenhard B."/>
            <person name="Wells C."/>
            <person name="Kodzius R."/>
            <person name="Shimokawa K."/>
            <person name="Bajic V.B."/>
            <person name="Brenner S.E."/>
            <person name="Batalov S."/>
            <person name="Forrest A.R."/>
            <person name="Zavolan M."/>
            <person name="Davis M.J."/>
            <person name="Wilming L.G."/>
            <person name="Aidinis V."/>
            <person name="Allen J.E."/>
            <person name="Ambesi-Impiombato A."/>
            <person name="Apweiler R."/>
            <person name="Aturaliya R.N."/>
            <person name="Bailey T.L."/>
            <person name="Bansal M."/>
            <person name="Baxter L."/>
            <person name="Beisel K.W."/>
            <person name="Bersano T."/>
            <person name="Bono H."/>
            <person name="Chalk A.M."/>
            <person name="Chiu K.P."/>
            <person name="Choudhary V."/>
            <person name="Christoffels A."/>
            <person name="Clutterbuck D.R."/>
            <person name="Crowe M.L."/>
            <person name="Dalla E."/>
            <person name="Dalrymple B.P."/>
            <person name="de Bono B."/>
            <person name="Della Gatta G."/>
            <person name="di Bernardo D."/>
            <person name="Down T."/>
            <person name="Engstrom P."/>
            <person name="Fagiolini M."/>
            <person name="Faulkner G."/>
            <person name="Fletcher C.F."/>
            <person name="Fukushima T."/>
            <person name="Furuno M."/>
            <person name="Futaki S."/>
            <person name="Gariboldi M."/>
            <person name="Georgii-Hemming P."/>
            <person name="Gingeras T.R."/>
            <person name="Gojobori T."/>
            <person name="Green R.E."/>
            <person name="Gustincich S."/>
            <person name="Harbers M."/>
            <person name="Hayashi Y."/>
            <person name="Hensch T.K."/>
            <person name="Hirokawa N."/>
            <person name="Hill D."/>
            <person name="Huminiecki L."/>
            <person name="Iacono M."/>
            <person name="Ikeo K."/>
            <person name="Iwama A."/>
            <person name="Ishikawa T."/>
            <person name="Jakt M."/>
            <person name="Kanapin A."/>
            <person name="Katoh M."/>
            <person name="Kawasawa Y."/>
            <person name="Kelso J."/>
            <person name="Kitamura H."/>
            <person name="Kitano H."/>
            <person name="Kollias G."/>
            <person name="Krishnan S.P."/>
            <person name="Kruger A."/>
            <person name="Kummerfeld S.K."/>
            <person name="Kurochkin I.V."/>
            <person name="Lareau L.F."/>
            <person name="Lazarevic D."/>
            <person name="Lipovich L."/>
            <person name="Liu J."/>
            <person name="Liuni S."/>
            <person name="McWilliam S."/>
            <person name="Madan Babu M."/>
            <person name="Madera M."/>
            <person name="Marchionni L."/>
            <person name="Matsuda H."/>
            <person name="Matsuzawa S."/>
            <person name="Miki H."/>
            <person name="Mignone F."/>
            <person name="Miyake S."/>
            <person name="Morris K."/>
            <person name="Mottagui-Tabar S."/>
            <person name="Mulder N."/>
            <person name="Nakano N."/>
            <person name="Nakauchi H."/>
            <person name="Ng P."/>
            <person name="Nilsson R."/>
            <person name="Nishiguchi S."/>
            <person name="Nishikawa S."/>
            <person name="Nori F."/>
            <person name="Ohara O."/>
            <person name="Okazaki Y."/>
            <person name="Orlando V."/>
            <person name="Pang K.C."/>
            <person name="Pavan W.J."/>
            <person name="Pavesi G."/>
            <person name="Pesole G."/>
            <person name="Petrovsky N."/>
            <person name="Piazza S."/>
            <person name="Reed J."/>
            <person name="Reid J.F."/>
            <person name="Ring B.Z."/>
            <person name="Ringwald M."/>
            <person name="Rost B."/>
            <person name="Ruan Y."/>
            <person name="Salzberg S.L."/>
            <person name="Sandelin A."/>
            <person name="Schneider C."/>
            <person name="Schoenbach C."/>
            <person name="Sekiguchi K."/>
            <person name="Semple C.A."/>
            <person name="Seno S."/>
            <person name="Sessa L."/>
            <person name="Sheng Y."/>
            <person name="Shibata Y."/>
            <person name="Shimada H."/>
            <person name="Shimada K."/>
            <person name="Silva D."/>
            <person name="Sinclair B."/>
            <person name="Sperling S."/>
            <person name="Stupka E."/>
            <person name="Sugiura K."/>
            <person name="Sultana R."/>
            <person name="Takenaka Y."/>
            <person name="Taki K."/>
            <person name="Tammoja K."/>
            <person name="Tan S.L."/>
            <person name="Tang S."/>
            <person name="Taylor M.S."/>
            <person name="Tegner J."/>
            <person name="Teichmann S.A."/>
            <person name="Ueda H.R."/>
            <person name="van Nimwegen E."/>
            <person name="Verardo R."/>
            <person name="Wei C.L."/>
            <person name="Yagi K."/>
            <person name="Yamanishi H."/>
            <person name="Zabarovsky E."/>
            <person name="Zhu S."/>
            <person name="Zimmer A."/>
            <person name="Hide W."/>
            <person name="Bult C."/>
            <person name="Grimmond S.M."/>
            <person name="Teasdale R.D."/>
            <person name="Liu E.T."/>
            <person name="Brusic V."/>
            <person name="Quackenbush J."/>
            <person name="Wahlestedt C."/>
            <person name="Mattick J.S."/>
            <person name="Hume D.A."/>
            <person name="Kai C."/>
            <person name="Sasaki D."/>
            <person name="Tomaru Y."/>
            <person name="Fukuda S."/>
            <person name="Kanamori-Katayama M."/>
            <person name="Suzuki M."/>
            <person name="Aoki J."/>
            <person name="Arakawa T."/>
            <person name="Iida J."/>
            <person name="Imamura K."/>
            <person name="Itoh M."/>
            <person name="Kato T."/>
            <person name="Kawaji H."/>
            <person name="Kawagashira N."/>
            <person name="Kawashima T."/>
            <person name="Kojima M."/>
            <person name="Kondo S."/>
            <person name="Konno H."/>
            <person name="Nakano K."/>
            <person name="Ninomiya N."/>
            <person name="Nishio T."/>
            <person name="Okada M."/>
            <person name="Plessy C."/>
            <person name="Shibata K."/>
            <person name="Shiraki T."/>
            <person name="Suzuki S."/>
            <person name="Tagami M."/>
            <person name="Waki K."/>
            <person name="Watahiki A."/>
            <person name="Okamura-Oho Y."/>
            <person name="Suzuki H."/>
            <person name="Kawai J."/>
            <person name="Hayashizaki Y."/>
        </authorList>
    </citation>
    <scope>NUCLEOTIDE SEQUENCE [LARGE SCALE MRNA]</scope>
    <source>
        <strain>C57BL/6J</strain>
        <tissue>Embryo</tissue>
        <tissue>Spinal cord</tissue>
    </source>
</reference>
<reference key="3">
    <citation type="journal article" date="2004" name="Genome Res.">
        <title>The status, quality, and expansion of the NIH full-length cDNA project: the Mammalian Gene Collection (MGC).</title>
        <authorList>
            <consortium name="The MGC Project Team"/>
        </authorList>
    </citation>
    <scope>NUCLEOTIDE SEQUENCE [LARGE SCALE MRNA]</scope>
    <source>
        <strain>C57BL/6J</strain>
        <strain>FVB/N</strain>
        <tissue>Brain</tissue>
        <tissue>Colon</tissue>
    </source>
</reference>
<reference key="4">
    <citation type="submission" date="2007-04" db="UniProtKB">
        <authorList>
            <person name="Lubec G."/>
            <person name="Kang S.U."/>
        </authorList>
    </citation>
    <scope>PROTEIN SEQUENCE OF 25-35; 73-83; 122-136 AND 179-186</scope>
    <scope>IDENTIFICATION BY MASS SPECTROMETRY</scope>
    <source>
        <strain>C57BL/6J</strain>
        <tissue>Brain</tissue>
    </source>
</reference>
<reference key="5">
    <citation type="journal article" date="2003" name="J. Biol. Chem.">
        <title>Distinct Rab binding specificity of Rim1, Rim2, rabphilin, and Noc2. Identification of a critical determinant of Rab3A/Rab27A recognition by Rim2.</title>
        <authorList>
            <person name="Fukuda M."/>
        </authorList>
    </citation>
    <scope>INTERACTION WITH RIMS1; RIMS2; RPH3A AND RPH3AL</scope>
</reference>
<reference key="6">
    <citation type="journal article" date="2008" name="Arch. Biochem. Biophys.">
        <title>Interaction of Rab3B with microtubule-binding protein Gas8 in NIH 3T3 cells.</title>
        <authorList>
            <person name="Nishimura N."/>
            <person name="Araki K."/>
            <person name="Shinahara W."/>
            <person name="Nakano Y."/>
            <person name="Nishimura K."/>
            <person name="Higashio H."/>
            <person name="Sasaki T."/>
        </authorList>
    </citation>
    <scope>INTERACTION WITH GAS8</scope>
    <scope>SUBCELLULAR LOCATION</scope>
    <scope>TISSUE SPECIFICITY</scope>
</reference>
<reference key="7">
    <citation type="journal article" date="2008" name="Nat. Cell Biol.">
        <title>KIF1Bbeta- and KIF1A-mediated axonal transport of presynaptic regulator Rab3 occurs in a GTP-dependent manner through DENN/MADD.</title>
        <authorList>
            <person name="Niwa S."/>
            <person name="Tanaka Y."/>
            <person name="Hirokawa N."/>
        </authorList>
    </citation>
    <scope>FUNCTION</scope>
    <scope>INTERACTION WITH MADD</scope>
</reference>
<reference key="8">
    <citation type="journal article" date="2010" name="Cell">
        <title>A tissue-specific atlas of mouse protein phosphorylation and expression.</title>
        <authorList>
            <person name="Huttlin E.L."/>
            <person name="Jedrychowski M.P."/>
            <person name="Elias J.E."/>
            <person name="Goswami T."/>
            <person name="Rad R."/>
            <person name="Beausoleil S.A."/>
            <person name="Villen J."/>
            <person name="Haas W."/>
            <person name="Sowa M.E."/>
            <person name="Gygi S.P."/>
        </authorList>
    </citation>
    <scope>IDENTIFICATION BY MASS SPECTROMETRY [LARGE SCALE ANALYSIS]</scope>
    <source>
        <tissue>Brain</tissue>
        <tissue>Testis</tissue>
    </source>
</reference>
<reference key="9">
    <citation type="journal article" date="2017" name="Elife">
        <title>Systematic proteomic analysis of LRRK2-mediated Rab GTPase phosphorylation establishes a connection to ciliogenesis.</title>
        <authorList>
            <person name="Steger M."/>
            <person name="Diez F."/>
            <person name="Dhekne H.S."/>
            <person name="Lis P."/>
            <person name="Nirujogi R.S."/>
            <person name="Karayel O."/>
            <person name="Tonelli F."/>
            <person name="Martinez T.N."/>
            <person name="Lorentzen E."/>
            <person name="Pfeffer S.R."/>
            <person name="Alessi D.R."/>
            <person name="Mann M."/>
        </authorList>
    </citation>
    <scope>PHOSPHORYLATION AT THR-86</scope>
</reference>
<sequence>MASVTDGKTGIKDASDQNFDYMFKLLIIGNSSVGKTSFLFRYADDTFTPAFVSTVGIDFKVKTVYRHEKRVKLQIWDTAGQERYRTITTAYYRGAMGFILMYDITNEESFNAVQDWATQIKTYSWDNAQVILVGNKCDMEEERVVPTEKGRLLAEQLGFDFFEASAKENISVRQAFERLVDAICDKMSDSMDTDPSVLGASKTTRLSDTPPLLQQNCSC</sequence>
<dbReference type="EC" id="3.6.5.2" evidence="4"/>
<dbReference type="EMBL" id="AF312036">
    <property type="protein sequence ID" value="AAG60046.1"/>
    <property type="molecule type" value="mRNA"/>
</dbReference>
<dbReference type="EMBL" id="AF307514">
    <property type="protein sequence ID" value="AAL09395.1"/>
    <property type="molecule type" value="Genomic_DNA"/>
</dbReference>
<dbReference type="EMBL" id="AK012165">
    <property type="protein sequence ID" value="BAB28071.1"/>
    <property type="molecule type" value="mRNA"/>
</dbReference>
<dbReference type="EMBL" id="AK082959">
    <property type="protein sequence ID" value="BAC38710.1"/>
    <property type="molecule type" value="mRNA"/>
</dbReference>
<dbReference type="EMBL" id="BC051918">
    <property type="protein sequence ID" value="AAH51918.2"/>
    <property type="molecule type" value="mRNA"/>
</dbReference>
<dbReference type="EMBL" id="BC057173">
    <property type="protein sequence ID" value="AAH57173.1"/>
    <property type="molecule type" value="mRNA"/>
</dbReference>
<dbReference type="CCDS" id="CCDS18459.1"/>
<dbReference type="RefSeq" id="NP_076026.1">
    <property type="nucleotide sequence ID" value="NM_023537.5"/>
</dbReference>
<dbReference type="SMR" id="Q9CZT8"/>
<dbReference type="BioGRID" id="213749">
    <property type="interactions" value="11"/>
</dbReference>
<dbReference type="FunCoup" id="Q9CZT8">
    <property type="interactions" value="716"/>
</dbReference>
<dbReference type="IntAct" id="Q9CZT8">
    <property type="interactions" value="11"/>
</dbReference>
<dbReference type="MINT" id="Q9CZT8"/>
<dbReference type="STRING" id="10090.ENSMUSP00000102261"/>
<dbReference type="GlyGen" id="Q9CZT8">
    <property type="glycosylation" value="2 sites, 2 N-linked glycans (2 sites)"/>
</dbReference>
<dbReference type="iPTMnet" id="Q9CZT8"/>
<dbReference type="PhosphoSitePlus" id="Q9CZT8"/>
<dbReference type="SwissPalm" id="Q9CZT8"/>
<dbReference type="jPOST" id="Q9CZT8"/>
<dbReference type="PaxDb" id="10090-ENSMUSP00000102261"/>
<dbReference type="ProteomicsDB" id="300380"/>
<dbReference type="Antibodypedia" id="19062">
    <property type="antibodies" value="167 antibodies from 25 providers"/>
</dbReference>
<dbReference type="DNASU" id="69908"/>
<dbReference type="Ensembl" id="ENSMUST00000003502.4">
    <property type="protein sequence ID" value="ENSMUSP00000003502.4"/>
    <property type="gene ID" value="ENSMUSG00000003411.11"/>
</dbReference>
<dbReference type="Ensembl" id="ENSMUST00000106650.9">
    <property type="protein sequence ID" value="ENSMUSP00000102261.3"/>
    <property type="gene ID" value="ENSMUSG00000003411.11"/>
</dbReference>
<dbReference type="GeneID" id="69908"/>
<dbReference type="KEGG" id="mmu:69908"/>
<dbReference type="UCSC" id="uc008ubu.1">
    <property type="organism name" value="mouse"/>
</dbReference>
<dbReference type="AGR" id="MGI:1917158"/>
<dbReference type="CTD" id="5865"/>
<dbReference type="MGI" id="MGI:1917158">
    <property type="gene designation" value="Rab3b"/>
</dbReference>
<dbReference type="VEuPathDB" id="HostDB:ENSMUSG00000003411"/>
<dbReference type="eggNOG" id="KOG0093">
    <property type="taxonomic scope" value="Eukaryota"/>
</dbReference>
<dbReference type="GeneTree" id="ENSGT00940000159943"/>
<dbReference type="HOGENOM" id="CLU_041217_10_1_1"/>
<dbReference type="InParanoid" id="Q9CZT8"/>
<dbReference type="OMA" id="AICEKMS"/>
<dbReference type="OrthoDB" id="7061at9989"/>
<dbReference type="TreeFam" id="TF313199"/>
<dbReference type="Reactome" id="R-MMU-8873719">
    <property type="pathway name" value="RAB geranylgeranylation"/>
</dbReference>
<dbReference type="BioGRID-ORCS" id="69908">
    <property type="hits" value="1 hit in 78 CRISPR screens"/>
</dbReference>
<dbReference type="CD-CODE" id="CE726F99">
    <property type="entry name" value="Postsynaptic density"/>
</dbReference>
<dbReference type="ChiTaRS" id="Rab3b">
    <property type="organism name" value="mouse"/>
</dbReference>
<dbReference type="PRO" id="PR:Q9CZT8"/>
<dbReference type="Proteomes" id="UP000000589">
    <property type="component" value="Chromosome 4"/>
</dbReference>
<dbReference type="RNAct" id="Q9CZT8">
    <property type="molecule type" value="protein"/>
</dbReference>
<dbReference type="Bgee" id="ENSMUSG00000003411">
    <property type="expression patterns" value="Expressed in facial nucleus and 139 other cell types or tissues"/>
</dbReference>
<dbReference type="ExpressionAtlas" id="Q9CZT8">
    <property type="expression patterns" value="baseline and differential"/>
</dbReference>
<dbReference type="GO" id="GO:0098691">
    <property type="term" value="C:dopaminergic synapse"/>
    <property type="evidence" value="ECO:0007669"/>
    <property type="project" value="Ensembl"/>
</dbReference>
<dbReference type="GO" id="GO:0005794">
    <property type="term" value="C:Golgi apparatus"/>
    <property type="evidence" value="ECO:0007669"/>
    <property type="project" value="UniProtKB-SubCell"/>
</dbReference>
<dbReference type="GO" id="GO:0048471">
    <property type="term" value="C:perinuclear region of cytoplasm"/>
    <property type="evidence" value="ECO:0007669"/>
    <property type="project" value="Ensembl"/>
</dbReference>
<dbReference type="GO" id="GO:0005886">
    <property type="term" value="C:plasma membrane"/>
    <property type="evidence" value="ECO:0007669"/>
    <property type="project" value="UniProtKB-SubCell"/>
</dbReference>
<dbReference type="GO" id="GO:0008021">
    <property type="term" value="C:synaptic vesicle"/>
    <property type="evidence" value="ECO:0000314"/>
    <property type="project" value="MGI"/>
</dbReference>
<dbReference type="GO" id="GO:0030672">
    <property type="term" value="C:synaptic vesicle membrane"/>
    <property type="evidence" value="ECO:0007669"/>
    <property type="project" value="Ensembl"/>
</dbReference>
<dbReference type="GO" id="GO:0019003">
    <property type="term" value="F:GDP binding"/>
    <property type="evidence" value="ECO:0007669"/>
    <property type="project" value="Ensembl"/>
</dbReference>
<dbReference type="GO" id="GO:0005525">
    <property type="term" value="F:GTP binding"/>
    <property type="evidence" value="ECO:0007669"/>
    <property type="project" value="UniProtKB-KW"/>
</dbReference>
<dbReference type="GO" id="GO:0030742">
    <property type="term" value="F:GTP-dependent protein binding"/>
    <property type="evidence" value="ECO:0000353"/>
    <property type="project" value="MGI"/>
</dbReference>
<dbReference type="GO" id="GO:0003924">
    <property type="term" value="F:GTPase activity"/>
    <property type="evidence" value="ECO:0007669"/>
    <property type="project" value="Ensembl"/>
</dbReference>
<dbReference type="GO" id="GO:0031489">
    <property type="term" value="F:myosin V binding"/>
    <property type="evidence" value="ECO:0007669"/>
    <property type="project" value="Ensembl"/>
</dbReference>
<dbReference type="GO" id="GO:0019882">
    <property type="term" value="P:antigen processing and presentation"/>
    <property type="evidence" value="ECO:0007669"/>
    <property type="project" value="Ensembl"/>
</dbReference>
<dbReference type="GO" id="GO:0051586">
    <property type="term" value="P:positive regulation of dopamine uptake involved in synaptic transmission"/>
    <property type="evidence" value="ECO:0007669"/>
    <property type="project" value="Ensembl"/>
</dbReference>
<dbReference type="GO" id="GO:0015031">
    <property type="term" value="P:protein transport"/>
    <property type="evidence" value="ECO:0007669"/>
    <property type="project" value="UniProtKB-KW"/>
</dbReference>
<dbReference type="GO" id="GO:0017157">
    <property type="term" value="P:regulation of exocytosis"/>
    <property type="evidence" value="ECO:0000314"/>
    <property type="project" value="MGI"/>
</dbReference>
<dbReference type="GO" id="GO:0098693">
    <property type="term" value="P:regulation of synaptic vesicle cycle"/>
    <property type="evidence" value="ECO:0007669"/>
    <property type="project" value="Ensembl"/>
</dbReference>
<dbReference type="GO" id="GO:0097494">
    <property type="term" value="P:regulation of vesicle size"/>
    <property type="evidence" value="ECO:0007669"/>
    <property type="project" value="Ensembl"/>
</dbReference>
<dbReference type="CDD" id="cd01865">
    <property type="entry name" value="Rab3"/>
    <property type="match status" value="1"/>
</dbReference>
<dbReference type="FunFam" id="3.40.50.300:FF:000206">
    <property type="entry name" value="Ras-related protein Rab-3C"/>
    <property type="match status" value="1"/>
</dbReference>
<dbReference type="Gene3D" id="3.40.50.300">
    <property type="entry name" value="P-loop containing nucleotide triphosphate hydrolases"/>
    <property type="match status" value="1"/>
</dbReference>
<dbReference type="InterPro" id="IPR027417">
    <property type="entry name" value="P-loop_NTPase"/>
</dbReference>
<dbReference type="InterPro" id="IPR037872">
    <property type="entry name" value="Rab3"/>
</dbReference>
<dbReference type="InterPro" id="IPR005225">
    <property type="entry name" value="Small_GTP-bd"/>
</dbReference>
<dbReference type="InterPro" id="IPR001806">
    <property type="entry name" value="Small_GTPase"/>
</dbReference>
<dbReference type="InterPro" id="IPR050305">
    <property type="entry name" value="Small_GTPase_Rab"/>
</dbReference>
<dbReference type="NCBIfam" id="TIGR00231">
    <property type="entry name" value="small_GTP"/>
    <property type="match status" value="1"/>
</dbReference>
<dbReference type="PANTHER" id="PTHR47980">
    <property type="entry name" value="LD44762P"/>
    <property type="match status" value="1"/>
</dbReference>
<dbReference type="Pfam" id="PF00071">
    <property type="entry name" value="Ras"/>
    <property type="match status" value="1"/>
</dbReference>
<dbReference type="PRINTS" id="PR00449">
    <property type="entry name" value="RASTRNSFRMNG"/>
</dbReference>
<dbReference type="SMART" id="SM00175">
    <property type="entry name" value="RAB"/>
    <property type="match status" value="1"/>
</dbReference>
<dbReference type="SMART" id="SM00176">
    <property type="entry name" value="RAN"/>
    <property type="match status" value="1"/>
</dbReference>
<dbReference type="SMART" id="SM00173">
    <property type="entry name" value="RAS"/>
    <property type="match status" value="1"/>
</dbReference>
<dbReference type="SMART" id="SM00174">
    <property type="entry name" value="RHO"/>
    <property type="match status" value="1"/>
</dbReference>
<dbReference type="SUPFAM" id="SSF52540">
    <property type="entry name" value="P-loop containing nucleoside triphosphate hydrolases"/>
    <property type="match status" value="1"/>
</dbReference>
<dbReference type="PROSITE" id="PS51419">
    <property type="entry name" value="RAB"/>
    <property type="match status" value="1"/>
</dbReference>
<protein>
    <recommendedName>
        <fullName>Ras-related protein Rab-3B</fullName>
        <ecNumber evidence="4">3.6.5.2</ecNumber>
    </recommendedName>
</protein>
<organism>
    <name type="scientific">Mus musculus</name>
    <name type="common">Mouse</name>
    <dbReference type="NCBI Taxonomy" id="10090"/>
    <lineage>
        <taxon>Eukaryota</taxon>
        <taxon>Metazoa</taxon>
        <taxon>Chordata</taxon>
        <taxon>Craniata</taxon>
        <taxon>Vertebrata</taxon>
        <taxon>Euteleostomi</taxon>
        <taxon>Mammalia</taxon>
        <taxon>Eutheria</taxon>
        <taxon>Euarchontoglires</taxon>
        <taxon>Glires</taxon>
        <taxon>Rodentia</taxon>
        <taxon>Myomorpha</taxon>
        <taxon>Muroidea</taxon>
        <taxon>Muridae</taxon>
        <taxon>Murinae</taxon>
        <taxon>Mus</taxon>
        <taxon>Mus</taxon>
    </lineage>
</organism>
<name>RAB3B_MOUSE</name>
<feature type="initiator methionine" description="Removed" evidence="2">
    <location>
        <position position="1"/>
    </location>
</feature>
<feature type="chain" id="PRO_0000121082" description="Ras-related protein Rab-3B">
    <location>
        <begin position="2"/>
        <end position="219"/>
    </location>
</feature>
<feature type="short sequence motif" description="Switch 1" evidence="4">
    <location>
        <begin position="45"/>
        <end position="58"/>
    </location>
</feature>
<feature type="short sequence motif" description="Switch 2" evidence="4">
    <location>
        <begin position="78"/>
        <end position="96"/>
    </location>
</feature>
<feature type="binding site" evidence="4">
    <location>
        <position position="31"/>
    </location>
    <ligand>
        <name>GTP</name>
        <dbReference type="ChEBI" id="CHEBI:37565"/>
    </ligand>
</feature>
<feature type="binding site" evidence="4">
    <location>
        <position position="32"/>
    </location>
    <ligand>
        <name>GTP</name>
        <dbReference type="ChEBI" id="CHEBI:37565"/>
    </ligand>
</feature>
<feature type="binding site" evidence="4">
    <location>
        <position position="33"/>
    </location>
    <ligand>
        <name>GTP</name>
        <dbReference type="ChEBI" id="CHEBI:37565"/>
    </ligand>
</feature>
<feature type="binding site" evidence="4">
    <location>
        <position position="34"/>
    </location>
    <ligand>
        <name>GTP</name>
        <dbReference type="ChEBI" id="CHEBI:37565"/>
    </ligand>
</feature>
<feature type="binding site" evidence="4">
    <location>
        <position position="35"/>
    </location>
    <ligand>
        <name>GTP</name>
        <dbReference type="ChEBI" id="CHEBI:37565"/>
    </ligand>
</feature>
<feature type="binding site" evidence="4">
    <location>
        <position position="36"/>
    </location>
    <ligand>
        <name>GTP</name>
        <dbReference type="ChEBI" id="CHEBI:37565"/>
    </ligand>
</feature>
<feature type="binding site" evidence="4">
    <location>
        <position position="36"/>
    </location>
    <ligand>
        <name>Mg(2+)</name>
        <dbReference type="ChEBI" id="CHEBI:18420"/>
    </ligand>
</feature>
<feature type="binding site" evidence="4">
    <location>
        <position position="37"/>
    </location>
    <ligand>
        <name>GTP</name>
        <dbReference type="ChEBI" id="CHEBI:37565"/>
    </ligand>
</feature>
<feature type="binding site" evidence="4">
    <location>
        <position position="49"/>
    </location>
    <ligand>
        <name>GTP</name>
        <dbReference type="ChEBI" id="CHEBI:37565"/>
    </ligand>
</feature>
<feature type="binding site" evidence="4">
    <location>
        <position position="53"/>
    </location>
    <ligand>
        <name>GTP</name>
        <dbReference type="ChEBI" id="CHEBI:37565"/>
    </ligand>
</feature>
<feature type="binding site" evidence="4">
    <location>
        <position position="54"/>
    </location>
    <ligand>
        <name>Mg(2+)</name>
        <dbReference type="ChEBI" id="CHEBI:18420"/>
    </ligand>
</feature>
<feature type="binding site" evidence="4">
    <location>
        <position position="77"/>
    </location>
    <ligand>
        <name>Mg(2+)</name>
        <dbReference type="ChEBI" id="CHEBI:18420"/>
    </ligand>
</feature>
<feature type="binding site" evidence="4">
    <location>
        <position position="80"/>
    </location>
    <ligand>
        <name>GTP</name>
        <dbReference type="ChEBI" id="CHEBI:37565"/>
    </ligand>
</feature>
<feature type="binding site" evidence="4">
    <location>
        <position position="135"/>
    </location>
    <ligand>
        <name>GTP</name>
        <dbReference type="ChEBI" id="CHEBI:37565"/>
    </ligand>
</feature>
<feature type="binding site" evidence="4">
    <location>
        <position position="136"/>
    </location>
    <ligand>
        <name>GTP</name>
        <dbReference type="ChEBI" id="CHEBI:37565"/>
    </ligand>
</feature>
<feature type="binding site" evidence="4">
    <location>
        <position position="138"/>
    </location>
    <ligand>
        <name>GTP</name>
        <dbReference type="ChEBI" id="CHEBI:37565"/>
    </ligand>
</feature>
<feature type="binding site" evidence="4">
    <location>
        <position position="166"/>
    </location>
    <ligand>
        <name>GTP</name>
        <dbReference type="ChEBI" id="CHEBI:37565"/>
    </ligand>
</feature>
<feature type="binding site" evidence="4">
    <location>
        <position position="167"/>
    </location>
    <ligand>
        <name>GTP</name>
        <dbReference type="ChEBI" id="CHEBI:37565"/>
    </ligand>
</feature>
<feature type="modified residue" description="N-acetylalanine" evidence="2">
    <location>
        <position position="2"/>
    </location>
</feature>
<feature type="modified residue" description="Phosphothreonine; by LRRK2" evidence="9">
    <location>
        <position position="86"/>
    </location>
</feature>
<feature type="modified residue" description="Phosphoserine" evidence="5">
    <location>
        <position position="188"/>
    </location>
</feature>
<feature type="modified residue" description="Phosphoserine" evidence="4">
    <location>
        <position position="190"/>
    </location>
</feature>
<feature type="modified residue" description="Cysteine methyl ester" evidence="1">
    <location>
        <position position="219"/>
    </location>
</feature>
<feature type="lipid moiety-binding region" description="S-geranylgeranyl cysteine" evidence="1">
    <location>
        <position position="217"/>
    </location>
</feature>
<feature type="lipid moiety-binding region" description="S-geranylgeranyl cysteine" evidence="1">
    <location>
        <position position="219"/>
    </location>
</feature>
<proteinExistence type="evidence at protein level"/>
<accession>Q9CZT8</accession>
<accession>Q80WV9</accession>
<accession>Q920F1</accession>
<gene>
    <name evidence="11" type="primary">Rab3b</name>
</gene>
<comment type="function">
    <text evidence="4">The small GTPases Rab are key regulators of intracellular membrane trafficking, from the formation of transport vesicles to their fusion with membranes. Rabs cycle between an inactive GDP-bound form and an active GTP-bound form that is able to recruit to membranes different sets of downstream effectors directly responsible for vesicle formation, movement, tethering and fusion.</text>
</comment>
<comment type="catalytic activity">
    <reaction evidence="4">
        <text>GTP + H2O = GDP + phosphate + H(+)</text>
        <dbReference type="Rhea" id="RHEA:19669"/>
        <dbReference type="ChEBI" id="CHEBI:15377"/>
        <dbReference type="ChEBI" id="CHEBI:15378"/>
        <dbReference type="ChEBI" id="CHEBI:37565"/>
        <dbReference type="ChEBI" id="CHEBI:43474"/>
        <dbReference type="ChEBI" id="CHEBI:58189"/>
        <dbReference type="EC" id="3.6.5.2"/>
    </reaction>
    <physiologicalReaction direction="left-to-right" evidence="4">
        <dbReference type="Rhea" id="RHEA:19670"/>
    </physiologicalReaction>
</comment>
<comment type="cofactor">
    <cofactor evidence="4">
        <name>Mg(2+)</name>
        <dbReference type="ChEBI" id="CHEBI:18420"/>
    </cofactor>
</comment>
<comment type="activity regulation">
    <text evidence="3">Regulated by guanine nucleotide exchange factors (GEFs) which promote the exchange of bound GDP for free GTP. Regulated by GTPase activating proteins (GAPs) which increase the GTP hydrolysis activity. Inhibited by GDP dissociation inhibitors (GDIs) which prevent Rab-GDP dissociation.</text>
</comment>
<comment type="subunit">
    <text evidence="4 6 7 8">Interacts with RIMS1, RIMS2, RPH3A and RPH3AL (PubMed:12578829). The GTP-bound form interacts with GAS8/DRC4 (via coiled-coil domains) (PubMed:18396146). Interacts with GDI2, CHM and CHML; phosphorylation at Thr-86 disrupts these interactions (By similarity). Interacts with MADD (via uDENN domain); the GTP-bound form is preferred for interaction (PubMed:18849981).</text>
</comment>
<comment type="subcellular location">
    <subcellularLocation>
        <location evidence="10">Cell membrane</location>
        <topology evidence="10">Lipid-anchor</topology>
        <orientation evidence="10">Cytoplasmic side</orientation>
    </subcellularLocation>
    <subcellularLocation>
        <location evidence="7">Golgi apparatus</location>
    </subcellularLocation>
    <text evidence="7">Colocalizes with GAS8/DRC4 in the Golgi apparatus.</text>
</comment>
<comment type="tissue specificity">
    <text evidence="7">Abundantly expressed in testis, lung and brain.</text>
</comment>
<comment type="domain">
    <text evidence="4">Switch 1, switch 2 and the interswitch regions are characteristic of Rab GTPases and mediate the interactions with Rab downstream effectors. The switch regions undergo conformational changes upon nucleotide binding which drives interaction with specific sets of effector proteins, with most effectors only binding to GTP-bound Rab.</text>
</comment>
<comment type="PTM">
    <text evidence="4">Phosphorylation of Thr-86 in the switch II region by LRRK2 prevents the association of RAB regulatory proteins, including CHM, CHML and RAB GDP dissociation inhibitor GDI2.</text>
</comment>
<comment type="similarity">
    <text evidence="10">Belongs to the small GTPase superfamily. Rab family.</text>
</comment>
<keyword id="KW-0007">Acetylation</keyword>
<keyword id="KW-1003">Cell membrane</keyword>
<keyword id="KW-0903">Direct protein sequencing</keyword>
<keyword id="KW-0333">Golgi apparatus</keyword>
<keyword id="KW-0342">GTP-binding</keyword>
<keyword id="KW-0378">Hydrolase</keyword>
<keyword id="KW-0449">Lipoprotein</keyword>
<keyword id="KW-0460">Magnesium</keyword>
<keyword id="KW-0472">Membrane</keyword>
<keyword id="KW-0479">Metal-binding</keyword>
<keyword id="KW-0488">Methylation</keyword>
<keyword id="KW-0547">Nucleotide-binding</keyword>
<keyword id="KW-0597">Phosphoprotein</keyword>
<keyword id="KW-0636">Prenylation</keyword>
<keyword id="KW-0653">Protein transport</keyword>
<keyword id="KW-1185">Reference proteome</keyword>
<keyword id="KW-0813">Transport</keyword>
<evidence type="ECO:0000250" key="1"/>
<evidence type="ECO:0000250" key="2">
    <source>
        <dbReference type="UniProtKB" id="O95716"/>
    </source>
</evidence>
<evidence type="ECO:0000250" key="3">
    <source>
        <dbReference type="UniProtKB" id="P20336"/>
    </source>
</evidence>
<evidence type="ECO:0000250" key="4">
    <source>
        <dbReference type="UniProtKB" id="P20337"/>
    </source>
</evidence>
<evidence type="ECO:0000250" key="5">
    <source>
        <dbReference type="UniProtKB" id="Q63941"/>
    </source>
</evidence>
<evidence type="ECO:0000269" key="6">
    <source>
    </source>
</evidence>
<evidence type="ECO:0000269" key="7">
    <source>
    </source>
</evidence>
<evidence type="ECO:0000269" key="8">
    <source>
    </source>
</evidence>
<evidence type="ECO:0000269" key="9">
    <source>
    </source>
</evidence>
<evidence type="ECO:0000305" key="10"/>
<evidence type="ECO:0000312" key="11">
    <source>
        <dbReference type="MGI" id="MGI:1917158"/>
    </source>
</evidence>